<organism>
    <name type="scientific">Shigella flexneri</name>
    <dbReference type="NCBI Taxonomy" id="623"/>
    <lineage>
        <taxon>Bacteria</taxon>
        <taxon>Pseudomonadati</taxon>
        <taxon>Pseudomonadota</taxon>
        <taxon>Gammaproteobacteria</taxon>
        <taxon>Enterobacterales</taxon>
        <taxon>Enterobacteriaceae</taxon>
        <taxon>Shigella</taxon>
    </lineage>
</organism>
<reference key="1">
    <citation type="journal article" date="2002" name="Nucleic Acids Res.">
        <title>Genome sequence of Shigella flexneri 2a: insights into pathogenicity through comparison with genomes of Escherichia coli K12 and O157.</title>
        <authorList>
            <person name="Jin Q."/>
            <person name="Yuan Z."/>
            <person name="Xu J."/>
            <person name="Wang Y."/>
            <person name="Shen Y."/>
            <person name="Lu W."/>
            <person name="Wang J."/>
            <person name="Liu H."/>
            <person name="Yang J."/>
            <person name="Yang F."/>
            <person name="Zhang X."/>
            <person name="Zhang J."/>
            <person name="Yang G."/>
            <person name="Wu H."/>
            <person name="Qu D."/>
            <person name="Dong J."/>
            <person name="Sun L."/>
            <person name="Xue Y."/>
            <person name="Zhao A."/>
            <person name="Gao Y."/>
            <person name="Zhu J."/>
            <person name="Kan B."/>
            <person name="Ding K."/>
            <person name="Chen S."/>
            <person name="Cheng H."/>
            <person name="Yao Z."/>
            <person name="He B."/>
            <person name="Chen R."/>
            <person name="Ma D."/>
            <person name="Qiang B."/>
            <person name="Wen Y."/>
            <person name="Hou Y."/>
            <person name="Yu J."/>
        </authorList>
    </citation>
    <scope>NUCLEOTIDE SEQUENCE [LARGE SCALE GENOMIC DNA]</scope>
    <source>
        <strain>301 / Serotype 2a</strain>
    </source>
</reference>
<reference key="2">
    <citation type="journal article" date="2003" name="Infect. Immun.">
        <title>Complete genome sequence and comparative genomics of Shigella flexneri serotype 2a strain 2457T.</title>
        <authorList>
            <person name="Wei J."/>
            <person name="Goldberg M.B."/>
            <person name="Burland V."/>
            <person name="Venkatesan M.M."/>
            <person name="Deng W."/>
            <person name="Fournier G."/>
            <person name="Mayhew G.F."/>
            <person name="Plunkett G. III"/>
            <person name="Rose D.J."/>
            <person name="Darling A."/>
            <person name="Mau B."/>
            <person name="Perna N.T."/>
            <person name="Payne S.M."/>
            <person name="Runyen-Janecky L.J."/>
            <person name="Zhou S."/>
            <person name="Schwartz D.C."/>
            <person name="Blattner F.R."/>
        </authorList>
    </citation>
    <scope>NUCLEOTIDE SEQUENCE [LARGE SCALE GENOMIC DNA]</scope>
    <source>
        <strain>ATCC 700930 / 2457T / Serotype 2a</strain>
    </source>
</reference>
<name>ARAG_SHIFL</name>
<gene>
    <name evidence="1" type="primary">araG</name>
    <name type="ordered locus">SF1946</name>
    <name type="ordered locus">S2039</name>
</gene>
<feature type="chain" id="PRO_0000270480" description="Arabinose import ATP-binding protein AraG">
    <location>
        <begin position="1"/>
        <end position="504"/>
    </location>
</feature>
<feature type="domain" description="ABC transporter 1" evidence="1">
    <location>
        <begin position="8"/>
        <end position="243"/>
    </location>
</feature>
<feature type="domain" description="ABC transporter 2" evidence="1">
    <location>
        <begin position="256"/>
        <end position="499"/>
    </location>
</feature>
<feature type="binding site" evidence="1">
    <location>
        <begin position="40"/>
        <end position="47"/>
    </location>
    <ligand>
        <name>ATP</name>
        <dbReference type="ChEBI" id="CHEBI:30616"/>
    </ligand>
</feature>
<comment type="function">
    <text evidence="1">Part of the ABC transporter complex AraFGH involved in arabinose import. Responsible for energy coupling to the transport system.</text>
</comment>
<comment type="catalytic activity">
    <reaction evidence="1">
        <text>L-arabinose(out) + ATP + H2O = L-arabinose(in) + ADP + phosphate + H(+)</text>
        <dbReference type="Rhea" id="RHEA:30007"/>
        <dbReference type="ChEBI" id="CHEBI:15377"/>
        <dbReference type="ChEBI" id="CHEBI:15378"/>
        <dbReference type="ChEBI" id="CHEBI:17535"/>
        <dbReference type="ChEBI" id="CHEBI:30616"/>
        <dbReference type="ChEBI" id="CHEBI:43474"/>
        <dbReference type="ChEBI" id="CHEBI:456216"/>
        <dbReference type="EC" id="7.5.2.12"/>
    </reaction>
</comment>
<comment type="subunit">
    <text evidence="1">The complex is composed of two ATP-binding proteins (AraG), two transmembrane proteins (AraH) and a solute-binding protein (AraF).</text>
</comment>
<comment type="subcellular location">
    <subcellularLocation>
        <location evidence="1">Cell inner membrane</location>
        <topology evidence="1">Peripheral membrane protein</topology>
    </subcellularLocation>
</comment>
<comment type="similarity">
    <text evidence="1">Belongs to the ABC transporter superfamily. Arabinose importer (TC 3.A.1.2.2) family.</text>
</comment>
<proteinExistence type="inferred from homology"/>
<sequence length="504" mass="54919">MQQSTPYLSFRGIGKTFPGVKALTDISFDCYAGQVHALMGENGAGKSTLLKILSGNYAPTTGSVVINGQEMSFSDTTAALNAGVAIIYQELHLVPEMTVAENIYLGQLPHKGGIVNRSLLNYEAGLQLKHLGMDIDPDTPLKYLAIGQWQMVEIAKALARNAKIIAFDEPTSSLSAREIGNLFRVIRELRKEGRVILYVSHRMEEIFALSDAITVFKDGRYVKTFTDMQQVDHDALVQAMVGRDIGDIYGWQPRSYGEERLRLDAVKALGVRTPISLAVRSGEIVGLFGLVGAGRSELMKGLFGGTQITAGQVYIDQQPIDIRKPSHAIAAGMMLCPEARKAEGIIPVHSVRDNINISARRKHVLGGCVINNSWEENNADQHIRSLNIKTPGAEQLIMNLSGGNQQKAILGRWLSEEMKVILLDEPTRGIDVGAKHEIYNVIYALAAQGVAVLFASSDLPEVLGVADRIVVMREGEIAGELLHEQADERQALSLAMPKVSQAVA</sequence>
<keyword id="KW-0067">ATP-binding</keyword>
<keyword id="KW-0997">Cell inner membrane</keyword>
<keyword id="KW-1003">Cell membrane</keyword>
<keyword id="KW-0472">Membrane</keyword>
<keyword id="KW-0547">Nucleotide-binding</keyword>
<keyword id="KW-1185">Reference proteome</keyword>
<keyword id="KW-0677">Repeat</keyword>
<keyword id="KW-0762">Sugar transport</keyword>
<keyword id="KW-1278">Translocase</keyword>
<keyword id="KW-0813">Transport</keyword>
<evidence type="ECO:0000255" key="1">
    <source>
        <dbReference type="HAMAP-Rule" id="MF_01721"/>
    </source>
</evidence>
<dbReference type="EC" id="7.5.2.12" evidence="1"/>
<dbReference type="EMBL" id="AE005674">
    <property type="protein sequence ID" value="AAN43498.2"/>
    <property type="molecule type" value="Genomic_DNA"/>
</dbReference>
<dbReference type="EMBL" id="AE014073">
    <property type="protein sequence ID" value="AAP17328.1"/>
    <property type="molecule type" value="Genomic_DNA"/>
</dbReference>
<dbReference type="RefSeq" id="NP_707791.2">
    <property type="nucleotide sequence ID" value="NC_004337.2"/>
</dbReference>
<dbReference type="RefSeq" id="WP_001187792.1">
    <property type="nucleotide sequence ID" value="NZ_WPGW01000033.1"/>
</dbReference>
<dbReference type="SMR" id="Q83KP2"/>
<dbReference type="STRING" id="198214.SF1946"/>
<dbReference type="PaxDb" id="198214-SF1946"/>
<dbReference type="GeneID" id="1025151"/>
<dbReference type="KEGG" id="sfl:SF1946"/>
<dbReference type="KEGG" id="sfx:S2039"/>
<dbReference type="PATRIC" id="fig|198214.7.peg.2322"/>
<dbReference type="HOGENOM" id="CLU_000604_92_3_6"/>
<dbReference type="Proteomes" id="UP000001006">
    <property type="component" value="Chromosome"/>
</dbReference>
<dbReference type="Proteomes" id="UP000002673">
    <property type="component" value="Chromosome"/>
</dbReference>
<dbReference type="GO" id="GO:0005886">
    <property type="term" value="C:plasma membrane"/>
    <property type="evidence" value="ECO:0007669"/>
    <property type="project" value="UniProtKB-SubCell"/>
</dbReference>
<dbReference type="GO" id="GO:0015612">
    <property type="term" value="F:ABC-type L-arabinose transporter activity"/>
    <property type="evidence" value="ECO:0007669"/>
    <property type="project" value="UniProtKB-EC"/>
</dbReference>
<dbReference type="GO" id="GO:0005524">
    <property type="term" value="F:ATP binding"/>
    <property type="evidence" value="ECO:0007669"/>
    <property type="project" value="UniProtKB-KW"/>
</dbReference>
<dbReference type="GO" id="GO:0016887">
    <property type="term" value="F:ATP hydrolysis activity"/>
    <property type="evidence" value="ECO:0007669"/>
    <property type="project" value="InterPro"/>
</dbReference>
<dbReference type="CDD" id="cd03216">
    <property type="entry name" value="ABC_Carb_Monos_I"/>
    <property type="match status" value="1"/>
</dbReference>
<dbReference type="CDD" id="cd03215">
    <property type="entry name" value="ABC_Carb_Monos_II"/>
    <property type="match status" value="1"/>
</dbReference>
<dbReference type="FunFam" id="3.40.50.300:FF:000126">
    <property type="entry name" value="Galactose/methyl galactoside import ATP-binding protein MglA"/>
    <property type="match status" value="1"/>
</dbReference>
<dbReference type="FunFam" id="3.40.50.300:FF:000127">
    <property type="entry name" value="Ribose import ATP-binding protein RbsA"/>
    <property type="match status" value="1"/>
</dbReference>
<dbReference type="Gene3D" id="3.40.50.300">
    <property type="entry name" value="P-loop containing nucleotide triphosphate hydrolases"/>
    <property type="match status" value="2"/>
</dbReference>
<dbReference type="InterPro" id="IPR003593">
    <property type="entry name" value="AAA+_ATPase"/>
</dbReference>
<dbReference type="InterPro" id="IPR050107">
    <property type="entry name" value="ABC_carbohydrate_import_ATPase"/>
</dbReference>
<dbReference type="InterPro" id="IPR003439">
    <property type="entry name" value="ABC_transporter-like_ATP-bd"/>
</dbReference>
<dbReference type="InterPro" id="IPR017871">
    <property type="entry name" value="ABC_transporter-like_CS"/>
</dbReference>
<dbReference type="InterPro" id="IPR027417">
    <property type="entry name" value="P-loop_NTPase"/>
</dbReference>
<dbReference type="NCBIfam" id="NF008442">
    <property type="entry name" value="PRK11288.1"/>
    <property type="match status" value="1"/>
</dbReference>
<dbReference type="PANTHER" id="PTHR43790:SF6">
    <property type="entry name" value="ARABINOSE IMPORT ATP-BINDING PROTEIN ARAG"/>
    <property type="match status" value="1"/>
</dbReference>
<dbReference type="PANTHER" id="PTHR43790">
    <property type="entry name" value="CARBOHYDRATE TRANSPORT ATP-BINDING PROTEIN MG119-RELATED"/>
    <property type="match status" value="1"/>
</dbReference>
<dbReference type="Pfam" id="PF00005">
    <property type="entry name" value="ABC_tran"/>
    <property type="match status" value="2"/>
</dbReference>
<dbReference type="SMART" id="SM00382">
    <property type="entry name" value="AAA"/>
    <property type="match status" value="2"/>
</dbReference>
<dbReference type="SUPFAM" id="SSF52540">
    <property type="entry name" value="P-loop containing nucleoside triphosphate hydrolases"/>
    <property type="match status" value="2"/>
</dbReference>
<dbReference type="PROSITE" id="PS00211">
    <property type="entry name" value="ABC_TRANSPORTER_1"/>
    <property type="match status" value="1"/>
</dbReference>
<dbReference type="PROSITE" id="PS50893">
    <property type="entry name" value="ABC_TRANSPORTER_2"/>
    <property type="match status" value="2"/>
</dbReference>
<dbReference type="PROSITE" id="PS51268">
    <property type="entry name" value="ARAG"/>
    <property type="match status" value="1"/>
</dbReference>
<accession>Q83KP2</accession>
<accession>Q7UAB3</accession>
<protein>
    <recommendedName>
        <fullName evidence="1">Arabinose import ATP-binding protein AraG</fullName>
        <ecNumber evidence="1">7.5.2.12</ecNumber>
    </recommendedName>
</protein>